<gene>
    <name evidence="1" type="primary">rbfA</name>
    <name type="ordered locus">Pmob_1691</name>
</gene>
<protein>
    <recommendedName>
        <fullName evidence="1">Ribosome-binding factor A</fullName>
    </recommendedName>
</protein>
<comment type="function">
    <text evidence="1">One of several proteins that assist in the late maturation steps of the functional core of the 30S ribosomal subunit. Associates with free 30S ribosomal subunits (but not with 30S subunits that are part of 70S ribosomes or polysomes). Required for efficient processing of 16S rRNA. May interact with the 5'-terminal helix region of 16S rRNA.</text>
</comment>
<comment type="subunit">
    <text evidence="1">Monomer. Binds 30S ribosomal subunits, but not 50S ribosomal subunits or 70S ribosomes.</text>
</comment>
<comment type="subcellular location">
    <subcellularLocation>
        <location evidence="1">Cytoplasm</location>
    </subcellularLocation>
</comment>
<comment type="similarity">
    <text evidence="1">Belongs to the RbfA family.</text>
</comment>
<name>RBFA_PETMO</name>
<sequence>MAQYRREMLESEMKKLITQGFSQLKDPRLKDKFIDINMVRLSKDKSYLDVYVSSLDEDIDTIINILNNAKGMFRTLIAKNIKMFKVPEVRFHKDEGIEASIRINKLIEKIEKNEEGK</sequence>
<evidence type="ECO:0000255" key="1">
    <source>
        <dbReference type="HAMAP-Rule" id="MF_00003"/>
    </source>
</evidence>
<organism>
    <name type="scientific">Petrotoga mobilis (strain DSM 10674 / SJ95)</name>
    <dbReference type="NCBI Taxonomy" id="403833"/>
    <lineage>
        <taxon>Bacteria</taxon>
        <taxon>Thermotogati</taxon>
        <taxon>Thermotogota</taxon>
        <taxon>Thermotogae</taxon>
        <taxon>Petrotogales</taxon>
        <taxon>Petrotogaceae</taxon>
        <taxon>Petrotoga</taxon>
    </lineage>
</organism>
<accession>A9BI93</accession>
<feature type="chain" id="PRO_0000329329" description="Ribosome-binding factor A">
    <location>
        <begin position="1"/>
        <end position="117"/>
    </location>
</feature>
<reference key="1">
    <citation type="submission" date="2007-11" db="EMBL/GenBank/DDBJ databases">
        <title>Complete sequence of Petroga mobilis SJ95.</title>
        <authorList>
            <consortium name="US DOE Joint Genome Institute"/>
            <person name="Copeland A."/>
            <person name="Lucas S."/>
            <person name="Lapidus A."/>
            <person name="Barry K."/>
            <person name="Glavina del Rio T."/>
            <person name="Dalin E."/>
            <person name="Tice H."/>
            <person name="Pitluck S."/>
            <person name="Meincke L."/>
            <person name="Brettin T."/>
            <person name="Bruce D."/>
            <person name="Detter J.C."/>
            <person name="Han C."/>
            <person name="Kuske C.R."/>
            <person name="Schmutz J."/>
            <person name="Larimer F."/>
            <person name="Land M."/>
            <person name="Hauser L."/>
            <person name="Kyrpides N."/>
            <person name="Mikhailova N."/>
            <person name="Noll K."/>
            <person name="Richardson P."/>
        </authorList>
    </citation>
    <scope>NUCLEOTIDE SEQUENCE [LARGE SCALE GENOMIC DNA]</scope>
    <source>
        <strain>DSM 10674 / SJ95</strain>
    </source>
</reference>
<dbReference type="EMBL" id="CP000879">
    <property type="protein sequence ID" value="ABX32384.1"/>
    <property type="molecule type" value="Genomic_DNA"/>
</dbReference>
<dbReference type="RefSeq" id="WP_012209481.1">
    <property type="nucleotide sequence ID" value="NC_010003.1"/>
</dbReference>
<dbReference type="SMR" id="A9BI93"/>
<dbReference type="STRING" id="403833.Pmob_1691"/>
<dbReference type="KEGG" id="pmo:Pmob_1691"/>
<dbReference type="eggNOG" id="COG0858">
    <property type="taxonomic scope" value="Bacteria"/>
</dbReference>
<dbReference type="HOGENOM" id="CLU_089475_6_5_0"/>
<dbReference type="OrthoDB" id="46605at2"/>
<dbReference type="Proteomes" id="UP000000789">
    <property type="component" value="Chromosome"/>
</dbReference>
<dbReference type="GO" id="GO:0005829">
    <property type="term" value="C:cytosol"/>
    <property type="evidence" value="ECO:0007669"/>
    <property type="project" value="TreeGrafter"/>
</dbReference>
<dbReference type="GO" id="GO:0043024">
    <property type="term" value="F:ribosomal small subunit binding"/>
    <property type="evidence" value="ECO:0007669"/>
    <property type="project" value="TreeGrafter"/>
</dbReference>
<dbReference type="GO" id="GO:0030490">
    <property type="term" value="P:maturation of SSU-rRNA"/>
    <property type="evidence" value="ECO:0007669"/>
    <property type="project" value="UniProtKB-UniRule"/>
</dbReference>
<dbReference type="Gene3D" id="3.30.300.20">
    <property type="match status" value="1"/>
</dbReference>
<dbReference type="HAMAP" id="MF_00003">
    <property type="entry name" value="RbfA"/>
    <property type="match status" value="1"/>
</dbReference>
<dbReference type="InterPro" id="IPR015946">
    <property type="entry name" value="KH_dom-like_a/b"/>
</dbReference>
<dbReference type="InterPro" id="IPR000238">
    <property type="entry name" value="RbfA"/>
</dbReference>
<dbReference type="InterPro" id="IPR023799">
    <property type="entry name" value="RbfA_dom_sf"/>
</dbReference>
<dbReference type="InterPro" id="IPR020053">
    <property type="entry name" value="Ribosome-bd_factorA_CS"/>
</dbReference>
<dbReference type="NCBIfam" id="TIGR00082">
    <property type="entry name" value="rbfA"/>
    <property type="match status" value="1"/>
</dbReference>
<dbReference type="PANTHER" id="PTHR33515">
    <property type="entry name" value="RIBOSOME-BINDING FACTOR A, CHLOROPLASTIC-RELATED"/>
    <property type="match status" value="1"/>
</dbReference>
<dbReference type="PANTHER" id="PTHR33515:SF1">
    <property type="entry name" value="RIBOSOME-BINDING FACTOR A, CHLOROPLASTIC-RELATED"/>
    <property type="match status" value="1"/>
</dbReference>
<dbReference type="Pfam" id="PF02033">
    <property type="entry name" value="RBFA"/>
    <property type="match status" value="1"/>
</dbReference>
<dbReference type="SUPFAM" id="SSF89919">
    <property type="entry name" value="Ribosome-binding factor A, RbfA"/>
    <property type="match status" value="1"/>
</dbReference>
<dbReference type="PROSITE" id="PS01319">
    <property type="entry name" value="RBFA"/>
    <property type="match status" value="1"/>
</dbReference>
<proteinExistence type="inferred from homology"/>
<keyword id="KW-0963">Cytoplasm</keyword>
<keyword id="KW-0690">Ribosome biogenesis</keyword>